<protein>
    <recommendedName>
        <fullName evidence="1">23S rRNA (uracil(747)-C(5))-methyltransferase RlmC</fullName>
        <ecNumber evidence="1">2.1.1.189</ecNumber>
    </recommendedName>
    <alternativeName>
        <fullName evidence="1">23S rRNA(m5U747)-methyltransferase</fullName>
    </alternativeName>
</protein>
<comment type="function">
    <text evidence="1">Catalyzes the formation of 5-methyl-uridine at position 747 (m5U747) in 23S rRNA.</text>
</comment>
<comment type="catalytic activity">
    <reaction evidence="1">
        <text>uridine(747) in 23S rRNA + S-adenosyl-L-methionine = 5-methyluridine(747) in 23S rRNA + S-adenosyl-L-homocysteine + H(+)</text>
        <dbReference type="Rhea" id="RHEA:42628"/>
        <dbReference type="Rhea" id="RHEA-COMP:10154"/>
        <dbReference type="Rhea" id="RHEA-COMP:10155"/>
        <dbReference type="ChEBI" id="CHEBI:15378"/>
        <dbReference type="ChEBI" id="CHEBI:57856"/>
        <dbReference type="ChEBI" id="CHEBI:59789"/>
        <dbReference type="ChEBI" id="CHEBI:65315"/>
        <dbReference type="ChEBI" id="CHEBI:74447"/>
        <dbReference type="EC" id="2.1.1.189"/>
    </reaction>
</comment>
<comment type="similarity">
    <text evidence="1">Belongs to the class I-like SAM-binding methyltransferase superfamily. RNA M5U methyltransferase family. RlmC subfamily.</text>
</comment>
<sequence>MQCEFFIQKRCTSCHQCAQPYSQQVENKDQQLRELIAPAMDVQWLPPVTSADTAFRNKAKMVVLGAAHAPILGIEDAQGQPLSLVTCPLYPQPMQELLAYLENWIRIAGIPPYNKLKKKGELKFILLTRSENSGQFMLRFVARSHAVLERIERNLPTLIAAFPTIEVVSVNIQPVHMARLEGEEEIFLTETQSLLEQFNDVPMVIRPKSFFQTNPQVAEQLYATARAWVREIAPTQMWDLFCGVGGFALHCAAPNTAVTGIEIEPEAIASAQRSAQMMGIDNLSFAALDSAKFSQSQMSAPELVLVNPPRRGLGSELTAQLEALAPQHILYSSCNPQTMVKDIAELASYQMSRVQWFDMFPHTDHAEVLTLLVRK</sequence>
<keyword id="KW-0004">4Fe-4S</keyword>
<keyword id="KW-0408">Iron</keyword>
<keyword id="KW-0411">Iron-sulfur</keyword>
<keyword id="KW-0479">Metal-binding</keyword>
<keyword id="KW-0489">Methyltransferase</keyword>
<keyword id="KW-0698">rRNA processing</keyword>
<keyword id="KW-0949">S-adenosyl-L-methionine</keyword>
<keyword id="KW-0808">Transferase</keyword>
<dbReference type="EC" id="2.1.1.189" evidence="1"/>
<dbReference type="EMBL" id="CP001234">
    <property type="protein sequence ID" value="ACP07848.1"/>
    <property type="molecule type" value="Genomic_DNA"/>
</dbReference>
<dbReference type="RefSeq" id="WP_001149825.1">
    <property type="nucleotide sequence ID" value="NC_012580.1"/>
</dbReference>
<dbReference type="SMR" id="C3LWJ3"/>
<dbReference type="KEGG" id="vcm:VCM66_A0889"/>
<dbReference type="HOGENOM" id="CLU_014689_0_0_6"/>
<dbReference type="Proteomes" id="UP000001217">
    <property type="component" value="Chromosome II"/>
</dbReference>
<dbReference type="GO" id="GO:0051539">
    <property type="term" value="F:4 iron, 4 sulfur cluster binding"/>
    <property type="evidence" value="ECO:0007669"/>
    <property type="project" value="UniProtKB-KW"/>
</dbReference>
<dbReference type="GO" id="GO:0005506">
    <property type="term" value="F:iron ion binding"/>
    <property type="evidence" value="ECO:0007669"/>
    <property type="project" value="UniProtKB-UniRule"/>
</dbReference>
<dbReference type="GO" id="GO:0070041">
    <property type="term" value="F:rRNA (uridine-C5-)-methyltransferase activity"/>
    <property type="evidence" value="ECO:0007669"/>
    <property type="project" value="UniProtKB-UniRule"/>
</dbReference>
<dbReference type="GO" id="GO:0070475">
    <property type="term" value="P:rRNA base methylation"/>
    <property type="evidence" value="ECO:0007669"/>
    <property type="project" value="TreeGrafter"/>
</dbReference>
<dbReference type="CDD" id="cd02440">
    <property type="entry name" value="AdoMet_MTases"/>
    <property type="match status" value="1"/>
</dbReference>
<dbReference type="Gene3D" id="2.40.50.1070">
    <property type="match status" value="1"/>
</dbReference>
<dbReference type="Gene3D" id="3.40.50.150">
    <property type="entry name" value="Vaccinia Virus protein VP39"/>
    <property type="match status" value="1"/>
</dbReference>
<dbReference type="HAMAP" id="MF_01012">
    <property type="entry name" value="23SrRNA_methyltr_RlmC"/>
    <property type="match status" value="1"/>
</dbReference>
<dbReference type="InterPro" id="IPR011825">
    <property type="entry name" value="23SrRNA_MeTrfase_RlmC"/>
</dbReference>
<dbReference type="InterPro" id="IPR030390">
    <property type="entry name" value="MeTrfase_TrmA_AS"/>
</dbReference>
<dbReference type="InterPro" id="IPR029063">
    <property type="entry name" value="SAM-dependent_MTases_sf"/>
</dbReference>
<dbReference type="InterPro" id="IPR010280">
    <property type="entry name" value="U5_MeTrfase_fam"/>
</dbReference>
<dbReference type="NCBIfam" id="TIGR02085">
    <property type="entry name" value="meth_trns_rumB"/>
    <property type="match status" value="1"/>
</dbReference>
<dbReference type="PANTHER" id="PTHR11061">
    <property type="entry name" value="RNA M5U METHYLTRANSFERASE"/>
    <property type="match status" value="1"/>
</dbReference>
<dbReference type="PANTHER" id="PTHR11061:SF30">
    <property type="entry name" value="TRNA (URACIL(54)-C(5))-METHYLTRANSFERASE"/>
    <property type="match status" value="1"/>
</dbReference>
<dbReference type="Pfam" id="PF05958">
    <property type="entry name" value="tRNA_U5-meth_tr"/>
    <property type="match status" value="1"/>
</dbReference>
<dbReference type="SUPFAM" id="SSF53335">
    <property type="entry name" value="S-adenosyl-L-methionine-dependent methyltransferases"/>
    <property type="match status" value="1"/>
</dbReference>
<dbReference type="PROSITE" id="PS51687">
    <property type="entry name" value="SAM_MT_RNA_M5U"/>
    <property type="match status" value="1"/>
</dbReference>
<dbReference type="PROSITE" id="PS01230">
    <property type="entry name" value="TRMA_1"/>
    <property type="match status" value="1"/>
</dbReference>
<reference key="1">
    <citation type="journal article" date="2008" name="PLoS ONE">
        <title>A recalibrated molecular clock and independent origins for the cholera pandemic clones.</title>
        <authorList>
            <person name="Feng L."/>
            <person name="Reeves P.R."/>
            <person name="Lan R."/>
            <person name="Ren Y."/>
            <person name="Gao C."/>
            <person name="Zhou Z."/>
            <person name="Ren Y."/>
            <person name="Cheng J."/>
            <person name="Wang W."/>
            <person name="Wang J."/>
            <person name="Qian W."/>
            <person name="Li D."/>
            <person name="Wang L."/>
        </authorList>
    </citation>
    <scope>NUCLEOTIDE SEQUENCE [LARGE SCALE GENOMIC DNA]</scope>
    <source>
        <strain>M66-2</strain>
    </source>
</reference>
<name>RLMC_VIBCM</name>
<feature type="chain" id="PRO_1000148898" description="23S rRNA (uracil(747)-C(5))-methyltransferase RlmC">
    <location>
        <begin position="1"/>
        <end position="375"/>
    </location>
</feature>
<feature type="active site" description="Nucleophile" evidence="1">
    <location>
        <position position="334"/>
    </location>
</feature>
<feature type="binding site" evidence="1">
    <location>
        <position position="3"/>
    </location>
    <ligand>
        <name>[4Fe-4S] cluster</name>
        <dbReference type="ChEBI" id="CHEBI:49883"/>
    </ligand>
</feature>
<feature type="binding site" evidence="1">
    <location>
        <position position="11"/>
    </location>
    <ligand>
        <name>[4Fe-4S] cluster</name>
        <dbReference type="ChEBI" id="CHEBI:49883"/>
    </ligand>
</feature>
<feature type="binding site" evidence="1">
    <location>
        <position position="14"/>
    </location>
    <ligand>
        <name>[4Fe-4S] cluster</name>
        <dbReference type="ChEBI" id="CHEBI:49883"/>
    </ligand>
</feature>
<feature type="binding site" evidence="1">
    <location>
        <position position="87"/>
    </location>
    <ligand>
        <name>[4Fe-4S] cluster</name>
        <dbReference type="ChEBI" id="CHEBI:49883"/>
    </ligand>
</feature>
<feature type="binding site" evidence="1">
    <location>
        <position position="212"/>
    </location>
    <ligand>
        <name>S-adenosyl-L-methionine</name>
        <dbReference type="ChEBI" id="CHEBI:59789"/>
    </ligand>
</feature>
<feature type="binding site" evidence="1">
    <location>
        <position position="241"/>
    </location>
    <ligand>
        <name>S-adenosyl-L-methionine</name>
        <dbReference type="ChEBI" id="CHEBI:59789"/>
    </ligand>
</feature>
<feature type="binding site" evidence="1">
    <location>
        <position position="262"/>
    </location>
    <ligand>
        <name>S-adenosyl-L-methionine</name>
        <dbReference type="ChEBI" id="CHEBI:59789"/>
    </ligand>
</feature>
<feature type="binding site" evidence="1">
    <location>
        <position position="307"/>
    </location>
    <ligand>
        <name>S-adenosyl-L-methionine</name>
        <dbReference type="ChEBI" id="CHEBI:59789"/>
    </ligand>
</feature>
<proteinExistence type="inferred from homology"/>
<evidence type="ECO:0000255" key="1">
    <source>
        <dbReference type="HAMAP-Rule" id="MF_01012"/>
    </source>
</evidence>
<gene>
    <name evidence="1" type="primary">rlmC</name>
    <name type="synonym">rumB</name>
    <name type="ordered locus">VCM66_A0889</name>
</gene>
<organism>
    <name type="scientific">Vibrio cholerae serotype O1 (strain M66-2)</name>
    <dbReference type="NCBI Taxonomy" id="579112"/>
    <lineage>
        <taxon>Bacteria</taxon>
        <taxon>Pseudomonadati</taxon>
        <taxon>Pseudomonadota</taxon>
        <taxon>Gammaproteobacteria</taxon>
        <taxon>Vibrionales</taxon>
        <taxon>Vibrionaceae</taxon>
        <taxon>Vibrio</taxon>
    </lineage>
</organism>
<accession>C3LWJ3</accession>